<feature type="chain" id="PRO_0000313208" description="DNA ligase">
    <location>
        <begin position="1"/>
        <end position="695"/>
    </location>
</feature>
<feature type="domain" description="BRCT" evidence="1">
    <location>
        <begin position="599"/>
        <end position="688"/>
    </location>
</feature>
<feature type="region of interest" description="Disordered" evidence="2">
    <location>
        <begin position="52"/>
        <end position="71"/>
    </location>
</feature>
<feature type="region of interest" description="Disordered" evidence="2">
    <location>
        <begin position="676"/>
        <end position="695"/>
    </location>
</feature>
<feature type="compositionally biased region" description="Low complexity" evidence="2">
    <location>
        <begin position="679"/>
        <end position="695"/>
    </location>
</feature>
<feature type="active site" description="N6-AMP-lysine intermediate" evidence="1">
    <location>
        <position position="108"/>
    </location>
</feature>
<feature type="binding site" evidence="1">
    <location>
        <begin position="30"/>
        <end position="34"/>
    </location>
    <ligand>
        <name>NAD(+)</name>
        <dbReference type="ChEBI" id="CHEBI:57540"/>
    </ligand>
</feature>
<feature type="binding site" evidence="1">
    <location>
        <begin position="81"/>
        <end position="82"/>
    </location>
    <ligand>
        <name>NAD(+)</name>
        <dbReference type="ChEBI" id="CHEBI:57540"/>
    </ligand>
</feature>
<feature type="binding site" evidence="1">
    <location>
        <position position="106"/>
    </location>
    <ligand>
        <name>NAD(+)</name>
        <dbReference type="ChEBI" id="CHEBI:57540"/>
    </ligand>
</feature>
<feature type="binding site" evidence="1">
    <location>
        <position position="129"/>
    </location>
    <ligand>
        <name>NAD(+)</name>
        <dbReference type="ChEBI" id="CHEBI:57540"/>
    </ligand>
</feature>
<feature type="binding site" evidence="1">
    <location>
        <position position="169"/>
    </location>
    <ligand>
        <name>NAD(+)</name>
        <dbReference type="ChEBI" id="CHEBI:57540"/>
    </ligand>
</feature>
<feature type="binding site" evidence="1">
    <location>
        <position position="285"/>
    </location>
    <ligand>
        <name>NAD(+)</name>
        <dbReference type="ChEBI" id="CHEBI:57540"/>
    </ligand>
</feature>
<feature type="binding site" evidence="1">
    <location>
        <position position="309"/>
    </location>
    <ligand>
        <name>NAD(+)</name>
        <dbReference type="ChEBI" id="CHEBI:57540"/>
    </ligand>
</feature>
<feature type="binding site" evidence="1">
    <location>
        <position position="403"/>
    </location>
    <ligand>
        <name>Zn(2+)</name>
        <dbReference type="ChEBI" id="CHEBI:29105"/>
    </ligand>
</feature>
<feature type="binding site" evidence="1">
    <location>
        <position position="406"/>
    </location>
    <ligand>
        <name>Zn(2+)</name>
        <dbReference type="ChEBI" id="CHEBI:29105"/>
    </ligand>
</feature>
<feature type="binding site" evidence="1">
    <location>
        <position position="422"/>
    </location>
    <ligand>
        <name>Zn(2+)</name>
        <dbReference type="ChEBI" id="CHEBI:29105"/>
    </ligand>
</feature>
<feature type="binding site" evidence="1">
    <location>
        <position position="428"/>
    </location>
    <ligand>
        <name>Zn(2+)</name>
        <dbReference type="ChEBI" id="CHEBI:29105"/>
    </ligand>
</feature>
<evidence type="ECO:0000255" key="1">
    <source>
        <dbReference type="HAMAP-Rule" id="MF_01588"/>
    </source>
</evidence>
<evidence type="ECO:0000256" key="2">
    <source>
        <dbReference type="SAM" id="MobiDB-lite"/>
    </source>
</evidence>
<reference key="1">
    <citation type="journal article" date="2005" name="J. Bacteriol.">
        <title>Complete genome sequence and analysis of the multiresistant nosocomial pathogen Corynebacterium jeikeium K411, a lipid-requiring bacterium of the human skin flora.</title>
        <authorList>
            <person name="Tauch A."/>
            <person name="Kaiser O."/>
            <person name="Hain T."/>
            <person name="Goesmann A."/>
            <person name="Weisshaar B."/>
            <person name="Albersmeier A."/>
            <person name="Bekel T."/>
            <person name="Bischoff N."/>
            <person name="Brune I."/>
            <person name="Chakraborty T."/>
            <person name="Kalinowski J."/>
            <person name="Meyer F."/>
            <person name="Rupp O."/>
            <person name="Schneiker S."/>
            <person name="Viehoever P."/>
            <person name="Puehler A."/>
        </authorList>
    </citation>
    <scope>NUCLEOTIDE SEQUENCE [LARGE SCALE GENOMIC DNA]</scope>
    <source>
        <strain>K411</strain>
    </source>
</reference>
<dbReference type="EC" id="6.5.1.2" evidence="1"/>
<dbReference type="EMBL" id="CR931997">
    <property type="protein sequence ID" value="CAI37489.1"/>
    <property type="molecule type" value="Genomic_DNA"/>
</dbReference>
<dbReference type="RefSeq" id="WP_011273805.1">
    <property type="nucleotide sequence ID" value="NC_007164.1"/>
</dbReference>
<dbReference type="SMR" id="Q4JUL8"/>
<dbReference type="STRING" id="306537.jk1317"/>
<dbReference type="KEGG" id="cjk:jk1317"/>
<dbReference type="PATRIC" id="fig|306537.10.peg.1337"/>
<dbReference type="eggNOG" id="COG0272">
    <property type="taxonomic scope" value="Bacteria"/>
</dbReference>
<dbReference type="HOGENOM" id="CLU_007764_2_1_11"/>
<dbReference type="OrthoDB" id="9759736at2"/>
<dbReference type="Proteomes" id="UP000000545">
    <property type="component" value="Chromosome"/>
</dbReference>
<dbReference type="GO" id="GO:0005829">
    <property type="term" value="C:cytosol"/>
    <property type="evidence" value="ECO:0007669"/>
    <property type="project" value="TreeGrafter"/>
</dbReference>
<dbReference type="GO" id="GO:0003911">
    <property type="term" value="F:DNA ligase (NAD+) activity"/>
    <property type="evidence" value="ECO:0007669"/>
    <property type="project" value="UniProtKB-UniRule"/>
</dbReference>
<dbReference type="GO" id="GO:0046872">
    <property type="term" value="F:metal ion binding"/>
    <property type="evidence" value="ECO:0007669"/>
    <property type="project" value="UniProtKB-KW"/>
</dbReference>
<dbReference type="GO" id="GO:0006281">
    <property type="term" value="P:DNA repair"/>
    <property type="evidence" value="ECO:0007669"/>
    <property type="project" value="UniProtKB-KW"/>
</dbReference>
<dbReference type="GO" id="GO:0006260">
    <property type="term" value="P:DNA replication"/>
    <property type="evidence" value="ECO:0007669"/>
    <property type="project" value="UniProtKB-KW"/>
</dbReference>
<dbReference type="CDD" id="cd17748">
    <property type="entry name" value="BRCT_DNA_ligase_like"/>
    <property type="match status" value="1"/>
</dbReference>
<dbReference type="CDD" id="cd00114">
    <property type="entry name" value="LIGANc"/>
    <property type="match status" value="1"/>
</dbReference>
<dbReference type="FunFam" id="1.10.150.20:FF:000006">
    <property type="entry name" value="DNA ligase"/>
    <property type="match status" value="1"/>
</dbReference>
<dbReference type="FunFam" id="3.40.50.10190:FF:000054">
    <property type="entry name" value="DNA ligase"/>
    <property type="match status" value="1"/>
</dbReference>
<dbReference type="Gene3D" id="6.20.10.30">
    <property type="match status" value="1"/>
</dbReference>
<dbReference type="Gene3D" id="1.10.150.20">
    <property type="entry name" value="5' to 3' exonuclease, C-terminal subdomain"/>
    <property type="match status" value="2"/>
</dbReference>
<dbReference type="Gene3D" id="3.40.50.10190">
    <property type="entry name" value="BRCT domain"/>
    <property type="match status" value="1"/>
</dbReference>
<dbReference type="Gene3D" id="3.30.470.30">
    <property type="entry name" value="DNA ligase/mRNA capping enzyme"/>
    <property type="match status" value="1"/>
</dbReference>
<dbReference type="Gene3D" id="1.10.287.610">
    <property type="entry name" value="Helix hairpin bin"/>
    <property type="match status" value="1"/>
</dbReference>
<dbReference type="Gene3D" id="2.40.50.140">
    <property type="entry name" value="Nucleic acid-binding proteins"/>
    <property type="match status" value="1"/>
</dbReference>
<dbReference type="HAMAP" id="MF_01588">
    <property type="entry name" value="DNA_ligase_A"/>
    <property type="match status" value="1"/>
</dbReference>
<dbReference type="InterPro" id="IPR001357">
    <property type="entry name" value="BRCT_dom"/>
</dbReference>
<dbReference type="InterPro" id="IPR036420">
    <property type="entry name" value="BRCT_dom_sf"/>
</dbReference>
<dbReference type="InterPro" id="IPR041663">
    <property type="entry name" value="DisA/LigA_HHH"/>
</dbReference>
<dbReference type="InterPro" id="IPR001679">
    <property type="entry name" value="DNA_ligase"/>
</dbReference>
<dbReference type="InterPro" id="IPR018239">
    <property type="entry name" value="DNA_ligase_AS"/>
</dbReference>
<dbReference type="InterPro" id="IPR013839">
    <property type="entry name" value="DNAligase_adenylation"/>
</dbReference>
<dbReference type="InterPro" id="IPR013840">
    <property type="entry name" value="DNAligase_N"/>
</dbReference>
<dbReference type="InterPro" id="IPR012340">
    <property type="entry name" value="NA-bd_OB-fold"/>
</dbReference>
<dbReference type="InterPro" id="IPR004150">
    <property type="entry name" value="NAD_DNA_ligase_OB"/>
</dbReference>
<dbReference type="InterPro" id="IPR010994">
    <property type="entry name" value="RuvA_2-like"/>
</dbReference>
<dbReference type="InterPro" id="IPR004149">
    <property type="entry name" value="Znf_DNAligase_C4"/>
</dbReference>
<dbReference type="NCBIfam" id="TIGR00575">
    <property type="entry name" value="dnlj"/>
    <property type="match status" value="1"/>
</dbReference>
<dbReference type="NCBIfam" id="NF005932">
    <property type="entry name" value="PRK07956.1"/>
    <property type="match status" value="1"/>
</dbReference>
<dbReference type="PANTHER" id="PTHR23389">
    <property type="entry name" value="CHROMOSOME TRANSMISSION FIDELITY FACTOR 18"/>
    <property type="match status" value="1"/>
</dbReference>
<dbReference type="PANTHER" id="PTHR23389:SF9">
    <property type="entry name" value="DNA LIGASE"/>
    <property type="match status" value="1"/>
</dbReference>
<dbReference type="Pfam" id="PF00533">
    <property type="entry name" value="BRCT"/>
    <property type="match status" value="1"/>
</dbReference>
<dbReference type="Pfam" id="PF01653">
    <property type="entry name" value="DNA_ligase_aden"/>
    <property type="match status" value="1"/>
</dbReference>
<dbReference type="Pfam" id="PF03120">
    <property type="entry name" value="DNA_ligase_OB"/>
    <property type="match status" value="1"/>
</dbReference>
<dbReference type="Pfam" id="PF03119">
    <property type="entry name" value="DNA_ligase_ZBD"/>
    <property type="match status" value="1"/>
</dbReference>
<dbReference type="Pfam" id="PF12826">
    <property type="entry name" value="HHH_2"/>
    <property type="match status" value="1"/>
</dbReference>
<dbReference type="Pfam" id="PF22745">
    <property type="entry name" value="Nlig-Ia"/>
    <property type="match status" value="1"/>
</dbReference>
<dbReference type="PIRSF" id="PIRSF001604">
    <property type="entry name" value="LigA"/>
    <property type="match status" value="1"/>
</dbReference>
<dbReference type="SMART" id="SM00292">
    <property type="entry name" value="BRCT"/>
    <property type="match status" value="1"/>
</dbReference>
<dbReference type="SMART" id="SM00532">
    <property type="entry name" value="LIGANc"/>
    <property type="match status" value="1"/>
</dbReference>
<dbReference type="SUPFAM" id="SSF52113">
    <property type="entry name" value="BRCT domain"/>
    <property type="match status" value="1"/>
</dbReference>
<dbReference type="SUPFAM" id="SSF56091">
    <property type="entry name" value="DNA ligase/mRNA capping enzyme, catalytic domain"/>
    <property type="match status" value="1"/>
</dbReference>
<dbReference type="SUPFAM" id="SSF50249">
    <property type="entry name" value="Nucleic acid-binding proteins"/>
    <property type="match status" value="1"/>
</dbReference>
<dbReference type="SUPFAM" id="SSF47781">
    <property type="entry name" value="RuvA domain 2-like"/>
    <property type="match status" value="1"/>
</dbReference>
<dbReference type="PROSITE" id="PS50172">
    <property type="entry name" value="BRCT"/>
    <property type="match status" value="1"/>
</dbReference>
<dbReference type="PROSITE" id="PS01055">
    <property type="entry name" value="DNA_LIGASE_N1"/>
    <property type="match status" value="1"/>
</dbReference>
<gene>
    <name evidence="1" type="primary">ligA</name>
    <name type="ordered locus">jk1317</name>
</gene>
<accession>Q4JUL8</accession>
<protein>
    <recommendedName>
        <fullName evidence="1">DNA ligase</fullName>
        <ecNumber evidence="1">6.5.1.2</ecNumber>
    </recommendedName>
    <alternativeName>
        <fullName evidence="1">Polydeoxyribonucleotide synthase [NAD(+)]</fullName>
    </alternativeName>
</protein>
<sequence>MSTQSRWQELADQVRHHRQLYYYGEPEISDADFDALLQELKDLEQAHPEVVTGASPTEEVAPAPPTSSPFRNVDHREQMLSLDNVFDTEQLAGWLDRTPAKTYLTELKIDGASINLLYIDGQLELALTRGDGTTGEDITHNARTLDDIPDTLHGTDEFPVPELVEIRGEVFIDVEDFAAMNAQRQAEGLKMFANPRNAAAGAMRQKNSADTAKRPLKLICHGIGAREGFSPASQHDAYRAIAAWGLPVSPYTKQVHSAKEVQQQVEYWGNHRHDAAHEMDGLVVKVDSLEEQLELGHTSRAPRWAIAYKYPPEEAMTTLHNIRVGIGRTGRATPYAVMAPKYVAGSTVSMATLHNPTEAHRKGVLLGDTITIRKAGEVIPEVLGPVEDKRTGAERPFLFSTFCPECGTRLAPSKVGDADWRCPNTQYCPGQLHTRLTYLASRKAFDIDALGEKGAYDLIHSGVLADESELFDLRAEDLEKTSSYATKAGKLNKSGETLLEKLQSAKEADLWRVLVALSIRHVGPTAAKALAKHFESVEDIASASAEEMAGIDGVAETIAESISDWFTVDWHRRIVDRWAAAGVRMRREAGNVPGAADGVDSALLEGLTIVVTGSLEDFDRTAAKEAIEARGGKAAGSVSKKTDFLVAGEKAGSKLKKAEDLGVPVLDEAAFKELLENGAPSSGDDASTSADSVDD</sequence>
<organism>
    <name type="scientific">Corynebacterium jeikeium (strain K411)</name>
    <dbReference type="NCBI Taxonomy" id="306537"/>
    <lineage>
        <taxon>Bacteria</taxon>
        <taxon>Bacillati</taxon>
        <taxon>Actinomycetota</taxon>
        <taxon>Actinomycetes</taxon>
        <taxon>Mycobacteriales</taxon>
        <taxon>Corynebacteriaceae</taxon>
        <taxon>Corynebacterium</taxon>
    </lineage>
</organism>
<name>DNLJ_CORJK</name>
<keyword id="KW-0227">DNA damage</keyword>
<keyword id="KW-0234">DNA repair</keyword>
<keyword id="KW-0235">DNA replication</keyword>
<keyword id="KW-0436">Ligase</keyword>
<keyword id="KW-0460">Magnesium</keyword>
<keyword id="KW-0464">Manganese</keyword>
<keyword id="KW-0479">Metal-binding</keyword>
<keyword id="KW-0520">NAD</keyword>
<keyword id="KW-1185">Reference proteome</keyword>
<keyword id="KW-0862">Zinc</keyword>
<proteinExistence type="inferred from homology"/>
<comment type="function">
    <text evidence="1">DNA ligase that catalyzes the formation of phosphodiester linkages between 5'-phosphoryl and 3'-hydroxyl groups in double-stranded DNA using NAD as a coenzyme and as the energy source for the reaction. It is essential for DNA replication and repair of damaged DNA.</text>
</comment>
<comment type="catalytic activity">
    <reaction evidence="1">
        <text>NAD(+) + (deoxyribonucleotide)n-3'-hydroxyl + 5'-phospho-(deoxyribonucleotide)m = (deoxyribonucleotide)n+m + AMP + beta-nicotinamide D-nucleotide.</text>
        <dbReference type="EC" id="6.5.1.2"/>
    </reaction>
</comment>
<comment type="cofactor">
    <cofactor evidence="1">
        <name>Mg(2+)</name>
        <dbReference type="ChEBI" id="CHEBI:18420"/>
    </cofactor>
    <cofactor evidence="1">
        <name>Mn(2+)</name>
        <dbReference type="ChEBI" id="CHEBI:29035"/>
    </cofactor>
</comment>
<comment type="similarity">
    <text evidence="1">Belongs to the NAD-dependent DNA ligase family. LigA subfamily.</text>
</comment>